<reference key="1">
    <citation type="submission" date="2006-04" db="EMBL/GenBank/DDBJ databases">
        <authorList>
            <consortium name="NIH - Mammalian Gene Collection (MGC) project"/>
        </authorList>
    </citation>
    <scope>NUCLEOTIDE SEQUENCE [LARGE SCALE MRNA]</scope>
    <source>
        <strain>Hereford</strain>
        <tissue>Uterus</tissue>
    </source>
</reference>
<keyword id="KW-0007">Acetylation</keyword>
<keyword id="KW-0067">ATP-binding</keyword>
<keyword id="KW-0131">Cell cycle</keyword>
<keyword id="KW-0158">Chromosome</keyword>
<keyword id="KW-0235">DNA replication</keyword>
<keyword id="KW-0238">DNA-binding</keyword>
<keyword id="KW-0347">Helicase</keyword>
<keyword id="KW-0378">Hydrolase</keyword>
<keyword id="KW-0547">Nucleotide-binding</keyword>
<keyword id="KW-0539">Nucleus</keyword>
<keyword id="KW-0597">Phosphoprotein</keyword>
<keyword id="KW-1185">Reference proteome</keyword>
<protein>
    <recommendedName>
        <fullName>DNA replication licensing factor MCM3</fullName>
        <ecNumber>3.6.4.12</ecNumber>
    </recommendedName>
</protein>
<proteinExistence type="evidence at transcript level"/>
<accession>A4FUD9</accession>
<gene>
    <name type="primary">MCM3</name>
</gene>
<name>MCM3_BOVIN</name>
<feature type="initiator methionine" description="Removed" evidence="1">
    <location>
        <position position="1"/>
    </location>
</feature>
<feature type="chain" id="PRO_0000318902" description="DNA replication licensing factor MCM3">
    <location>
        <begin position="2"/>
        <end position="808"/>
    </location>
</feature>
<feature type="domain" description="MCM">
    <location>
        <begin position="295"/>
        <end position="502"/>
    </location>
</feature>
<feature type="region of interest" description="Disordered" evidence="4">
    <location>
        <begin position="662"/>
        <end position="739"/>
    </location>
</feature>
<feature type="short sequence motif" description="Arginine finger">
    <location>
        <begin position="477"/>
        <end position="480"/>
    </location>
</feature>
<feature type="compositionally biased region" description="Basic and acidic residues" evidence="4">
    <location>
        <begin position="679"/>
        <end position="688"/>
    </location>
</feature>
<feature type="compositionally biased region" description="Basic and acidic residues" evidence="4">
    <location>
        <begin position="727"/>
        <end position="739"/>
    </location>
</feature>
<feature type="binding site" evidence="1">
    <location>
        <position position="353"/>
    </location>
    <ligand>
        <name>ADP</name>
        <dbReference type="ChEBI" id="CHEBI:456216"/>
        <note>ligand shared with MCM5</note>
    </ligand>
</feature>
<feature type="binding site" evidence="1">
    <location>
        <position position="393"/>
    </location>
    <ligand>
        <name>ADP</name>
        <dbReference type="ChEBI" id="CHEBI:456216"/>
        <note>ligand shared with MCM5</note>
    </ligand>
</feature>
<feature type="binding site" evidence="1">
    <location>
        <position position="394"/>
    </location>
    <ligand>
        <name>ADP</name>
        <dbReference type="ChEBI" id="CHEBI:456216"/>
        <note>ligand shared with MCM5</note>
    </ligand>
</feature>
<feature type="binding site" evidence="1">
    <location>
        <position position="395"/>
    </location>
    <ligand>
        <name>ADP</name>
        <dbReference type="ChEBI" id="CHEBI:456216"/>
        <note>ligand shared with MCM5</note>
    </ligand>
</feature>
<feature type="binding site" evidence="1">
    <location>
        <position position="397"/>
    </location>
    <ligand>
        <name>ADP</name>
        <dbReference type="ChEBI" id="CHEBI:456216"/>
        <note>ligand shared with MCM5</note>
    </ligand>
</feature>
<feature type="binding site" evidence="1">
    <location>
        <position position="523"/>
    </location>
    <ligand>
        <name>ATP</name>
        <dbReference type="ChEBI" id="CHEBI:30616"/>
        <note>ligand shared with MCM7</note>
    </ligand>
</feature>
<feature type="binding site" evidence="1">
    <location>
        <position position="664"/>
    </location>
    <ligand>
        <name>ATP</name>
        <dbReference type="ChEBI" id="CHEBI:30616"/>
        <note>ligand shared with MCM7</note>
    </ligand>
</feature>
<feature type="modified residue" description="N-acetylalanine" evidence="1">
    <location>
        <position position="2"/>
    </location>
</feature>
<feature type="modified residue" description="Phosphoserine" evidence="1">
    <location>
        <position position="160"/>
    </location>
</feature>
<feature type="modified residue" description="Phosphoserine" evidence="1">
    <location>
        <position position="275"/>
    </location>
</feature>
<feature type="modified residue" description="N6-acetyllysine" evidence="2">
    <location>
        <position position="293"/>
    </location>
</feature>
<feature type="modified residue" description="Phosphoserine; by ATM" evidence="1">
    <location>
        <position position="535"/>
    </location>
</feature>
<feature type="modified residue" description="N6-acetyllysine" evidence="2">
    <location>
        <position position="547"/>
    </location>
</feature>
<feature type="modified residue" description="Phosphoserine" evidence="1">
    <location>
        <position position="611"/>
    </location>
</feature>
<feature type="modified residue" description="Phosphoserine" evidence="1">
    <location>
        <position position="668"/>
    </location>
</feature>
<feature type="modified residue" description="Phosphoserine" evidence="1">
    <location>
        <position position="672"/>
    </location>
</feature>
<feature type="modified residue" description="Phosphoserine" evidence="1">
    <location>
        <position position="681"/>
    </location>
</feature>
<feature type="modified residue" description="Phosphotyrosine" evidence="1">
    <location>
        <position position="708"/>
    </location>
</feature>
<feature type="modified residue" description="Phosphothreonine" evidence="1">
    <location>
        <position position="713"/>
    </location>
</feature>
<feature type="modified residue" description="Phosphothreonine" evidence="1">
    <location>
        <position position="722"/>
    </location>
</feature>
<feature type="modified residue" description="Phosphoserine" evidence="2">
    <location>
        <position position="728"/>
    </location>
</feature>
<feature type="modified residue" description="Phosphoserine" evidence="2">
    <location>
        <position position="734"/>
    </location>
</feature>
<comment type="function">
    <text evidence="1">Acts as a component of the MCM2-7 complex (MCM complex) which is the replicative helicase essential for 'once per cell cycle' DNA replication initiation and elongation in eukaryotic cells. Core component of CDC45-MCM-GINS (CMG) helicase, the molecular machine that unwinds template DNA during replication, and around which the replisome is built. The active ATPase sites in the MCM2-7 ring are formed through the interaction surfaces of two neighboring subunits such that a critical structure of a conserved arginine finger motif is provided in trans relative to the ATP-binding site of the Walker A box of the adjacent subunit. The six ATPase active sites, however, are likely to contribute differentially to the complex helicase activity. Required for the entry in S phase and for cell division.</text>
</comment>
<comment type="catalytic activity">
    <reaction evidence="1">
        <text>ATP + H2O = ADP + phosphate + H(+)</text>
        <dbReference type="Rhea" id="RHEA:13065"/>
        <dbReference type="ChEBI" id="CHEBI:15377"/>
        <dbReference type="ChEBI" id="CHEBI:15378"/>
        <dbReference type="ChEBI" id="CHEBI:30616"/>
        <dbReference type="ChEBI" id="CHEBI:43474"/>
        <dbReference type="ChEBI" id="CHEBI:456216"/>
        <dbReference type="EC" id="3.6.4.12"/>
    </reaction>
    <physiologicalReaction direction="left-to-right" evidence="1">
        <dbReference type="Rhea" id="RHEA:13066"/>
    </physiologicalReaction>
</comment>
<comment type="subunit">
    <text evidence="1 2 3">Component of the MCM2-7 complex. The complex forms a toroidal hexameric ring with the proposed subunit order MCM2-MCM6-MCM4-MCM7-MCM3-MCM5. Component of the CMG helicase complex, a hexameric ring of related MCM2-7 subunits stabilized by CDC45 and the tetrameric GINS complex (By similarity). Associated with the replication-specific DNA polymerase alpha (By similarity). Interacts with MCMBP. Interacts with ANKRD17. Interacts with MCM3AP isoform MCM3AP; this interaction leads to MCM3 acetylation (By similarity).</text>
</comment>
<comment type="subcellular location">
    <subcellularLocation>
        <location evidence="1">Nucleus</location>
    </subcellularLocation>
    <subcellularLocation>
        <location evidence="1">Chromosome</location>
    </subcellularLocation>
    <text evidence="1">Associated with chromatin before the formation of nuclei and detaches from it as DNA replication progresses.</text>
</comment>
<comment type="PTM">
    <text evidence="1">Acetylated by MCM3AP.</text>
</comment>
<comment type="PTM">
    <text evidence="1">O-glycosylated (O-GlcNAcylated), in a cell cycle-dependent manner.</text>
</comment>
<comment type="similarity">
    <text evidence="5">Belongs to the MCM family.</text>
</comment>
<sequence length="808" mass="90858">MAGTVVLDDVELREAQRDYLDFLDDEEDQGIYQSKVRELISDNQYRLIVNVNDLRRKNEKRANRLLSNAFEELVAFQRALKDFVASIDATYAKQYEEFYIGLEGSFGSKHVSPRTLTSCFLSCVVCVEGIVTKCSLVRPKVVRSVHYCPATKKTIERRYSDLTSLVAFPSSSVYPTKDEENNPLETEYGLSVYKDHQIITIQEMPEKAPAGQLPRSVDVILDDDLVDRVKPGDRVQVVGTYRCLPGKKGGYTSGTFRTVLIACNVKQMSKDVQPSFSAEDIAKIKKFSKTRSKDIFDQLARSLAPSIHGHDYVKKAILCLLLGGVERDLENGSHIRGDINILLIGDPSVAKSQLLRYVLCTAPRAIPTTGRGSSGVGLTAAVTTDQETGERRLEAGAMVLADRGVVCIDEFDKMSDMDRTAIHEVMEQGRVTIAKAGIHARLNARCSVLAAANPVYGRYDQYKTPMENIGLQDSLLSRFDLLFIMLDQMDPEQDREISDHVLRMHRYRAPGEQDGDAMPLGSAVDILATDDPNFSPDDQQDTQIYEKHDNLLHGIKKKKEKMVSAAFMRKYIHVAKIIKPVLTQESAAYIAEEYSRLRSQDSMSSDTARTSPVTARTLETLIRLATAHAKARMSKTVDLQDAEEAVELVQYAYFKKVLEKEKKRKKRSEDESDAEDEVEKSQEDQEQKTKRRRICPSDAKEGDSYDPYDFTNTEEEMPQVHTPKATDSQETKESQKVELSESRLKAFKAALLEVFREAHAQSVGMNRLTESVNRDNEEPFSSAEIQAALSRMQDDNQVMVSEGIVFLI</sequence>
<dbReference type="EC" id="3.6.4.12"/>
<dbReference type="EMBL" id="BC114737">
    <property type="protein sequence ID" value="AAI14738.1"/>
    <property type="molecule type" value="mRNA"/>
</dbReference>
<dbReference type="RefSeq" id="NP_001013604.2">
    <property type="nucleotide sequence ID" value="NM_001013586.2"/>
</dbReference>
<dbReference type="SMR" id="A4FUD9"/>
<dbReference type="FunCoup" id="A4FUD9">
    <property type="interactions" value="2882"/>
</dbReference>
<dbReference type="STRING" id="9913.ENSBTAP00000014194"/>
<dbReference type="PaxDb" id="9913-ENSBTAP00000014194"/>
<dbReference type="GeneID" id="281302"/>
<dbReference type="KEGG" id="bta:281302"/>
<dbReference type="CTD" id="4172"/>
<dbReference type="VEuPathDB" id="HostDB:ENSBTAG00000010721"/>
<dbReference type="eggNOG" id="KOG0479">
    <property type="taxonomic scope" value="Eukaryota"/>
</dbReference>
<dbReference type="InParanoid" id="A4FUD9"/>
<dbReference type="OMA" id="NVYPQED"/>
<dbReference type="OrthoDB" id="1882346at2759"/>
<dbReference type="Reactome" id="R-BTA-176187">
    <property type="pathway name" value="Activation of ATR in response to replication stress"/>
</dbReference>
<dbReference type="Reactome" id="R-BTA-68867">
    <property type="pathway name" value="Assembly of the pre-replicative complex"/>
</dbReference>
<dbReference type="Reactome" id="R-BTA-68949">
    <property type="pathway name" value="Orc1 removal from chromatin"/>
</dbReference>
<dbReference type="Reactome" id="R-BTA-68962">
    <property type="pathway name" value="Activation of the pre-replicative complex"/>
</dbReference>
<dbReference type="Reactome" id="R-BTA-69052">
    <property type="pathway name" value="Switching of origins to a post-replicative state"/>
</dbReference>
<dbReference type="CD-CODE" id="D7FE2080">
    <property type="entry name" value="Nucleolus"/>
</dbReference>
<dbReference type="Proteomes" id="UP000009136">
    <property type="component" value="Chromosome 23"/>
</dbReference>
<dbReference type="Bgee" id="ENSBTAG00000010721">
    <property type="expression patterns" value="Expressed in nasopharynx and 108 other cell types or tissues"/>
</dbReference>
<dbReference type="GO" id="GO:0071162">
    <property type="term" value="C:CMG complex"/>
    <property type="evidence" value="ECO:0000250"/>
    <property type="project" value="UniProtKB"/>
</dbReference>
<dbReference type="GO" id="GO:0042555">
    <property type="term" value="C:MCM complex"/>
    <property type="evidence" value="ECO:0000250"/>
    <property type="project" value="UniProtKB"/>
</dbReference>
<dbReference type="GO" id="GO:0005634">
    <property type="term" value="C:nucleus"/>
    <property type="evidence" value="ECO:0000318"/>
    <property type="project" value="GO_Central"/>
</dbReference>
<dbReference type="GO" id="GO:0005524">
    <property type="term" value="F:ATP binding"/>
    <property type="evidence" value="ECO:0007669"/>
    <property type="project" value="UniProtKB-KW"/>
</dbReference>
<dbReference type="GO" id="GO:0016887">
    <property type="term" value="F:ATP hydrolysis activity"/>
    <property type="evidence" value="ECO:0007669"/>
    <property type="project" value="InterPro"/>
</dbReference>
<dbReference type="GO" id="GO:0004386">
    <property type="term" value="F:helicase activity"/>
    <property type="evidence" value="ECO:0007669"/>
    <property type="project" value="UniProtKB-KW"/>
</dbReference>
<dbReference type="GO" id="GO:0003697">
    <property type="term" value="F:single-stranded DNA binding"/>
    <property type="evidence" value="ECO:0000318"/>
    <property type="project" value="GO_Central"/>
</dbReference>
<dbReference type="GO" id="GO:0006271">
    <property type="term" value="P:DNA strand elongation involved in DNA replication"/>
    <property type="evidence" value="ECO:0000318"/>
    <property type="project" value="GO_Central"/>
</dbReference>
<dbReference type="GO" id="GO:0000727">
    <property type="term" value="P:double-strand break repair via break-induced replication"/>
    <property type="evidence" value="ECO:0000318"/>
    <property type="project" value="GO_Central"/>
</dbReference>
<dbReference type="GO" id="GO:1902975">
    <property type="term" value="P:mitotic DNA replication initiation"/>
    <property type="evidence" value="ECO:0000318"/>
    <property type="project" value="GO_Central"/>
</dbReference>
<dbReference type="CDD" id="cd17754">
    <property type="entry name" value="MCM3"/>
    <property type="match status" value="1"/>
</dbReference>
<dbReference type="FunFam" id="2.20.28.10:FF:000006">
    <property type="entry name" value="DNA helicase"/>
    <property type="match status" value="1"/>
</dbReference>
<dbReference type="FunFam" id="3.30.1640.10:FF:000002">
    <property type="entry name" value="DNA helicase"/>
    <property type="match status" value="1"/>
</dbReference>
<dbReference type="FunFam" id="3.40.50.300:FF:000234">
    <property type="entry name" value="DNA helicase"/>
    <property type="match status" value="1"/>
</dbReference>
<dbReference type="Gene3D" id="2.20.28.10">
    <property type="match status" value="1"/>
</dbReference>
<dbReference type="Gene3D" id="3.30.1640.10">
    <property type="entry name" value="mini-chromosome maintenance (MCM) complex, chain A, domain 1"/>
    <property type="match status" value="1"/>
</dbReference>
<dbReference type="Gene3D" id="2.40.50.140">
    <property type="entry name" value="Nucleic acid-binding proteins"/>
    <property type="match status" value="1"/>
</dbReference>
<dbReference type="Gene3D" id="3.40.50.300">
    <property type="entry name" value="P-loop containing nucleotide triphosphate hydrolases"/>
    <property type="match status" value="1"/>
</dbReference>
<dbReference type="InterPro" id="IPR003593">
    <property type="entry name" value="AAA+_ATPase"/>
</dbReference>
<dbReference type="InterPro" id="IPR031327">
    <property type="entry name" value="MCM"/>
</dbReference>
<dbReference type="InterPro" id="IPR008046">
    <property type="entry name" value="Mcm3"/>
</dbReference>
<dbReference type="InterPro" id="IPR018525">
    <property type="entry name" value="MCM_CS"/>
</dbReference>
<dbReference type="InterPro" id="IPR001208">
    <property type="entry name" value="MCM_dom"/>
</dbReference>
<dbReference type="InterPro" id="IPR041562">
    <property type="entry name" value="MCM_lid"/>
</dbReference>
<dbReference type="InterPro" id="IPR027925">
    <property type="entry name" value="MCM_N"/>
</dbReference>
<dbReference type="InterPro" id="IPR033762">
    <property type="entry name" value="MCM_OB"/>
</dbReference>
<dbReference type="InterPro" id="IPR012340">
    <property type="entry name" value="NA-bd_OB-fold"/>
</dbReference>
<dbReference type="InterPro" id="IPR027417">
    <property type="entry name" value="P-loop_NTPase"/>
</dbReference>
<dbReference type="InterPro" id="IPR056575">
    <property type="entry name" value="WH_MCM3_C"/>
</dbReference>
<dbReference type="PANTHER" id="PTHR11630">
    <property type="entry name" value="DNA REPLICATION LICENSING FACTOR MCM FAMILY MEMBER"/>
    <property type="match status" value="1"/>
</dbReference>
<dbReference type="PANTHER" id="PTHR11630:SF106">
    <property type="entry name" value="DNA REPLICATION LICENSING FACTOR MCM3"/>
    <property type="match status" value="1"/>
</dbReference>
<dbReference type="Pfam" id="PF00493">
    <property type="entry name" value="MCM"/>
    <property type="match status" value="1"/>
</dbReference>
<dbReference type="Pfam" id="PF17855">
    <property type="entry name" value="MCM_lid"/>
    <property type="match status" value="1"/>
</dbReference>
<dbReference type="Pfam" id="PF14551">
    <property type="entry name" value="MCM_N"/>
    <property type="match status" value="1"/>
</dbReference>
<dbReference type="Pfam" id="PF17207">
    <property type="entry name" value="MCM_OB"/>
    <property type="match status" value="1"/>
</dbReference>
<dbReference type="Pfam" id="PF23191">
    <property type="entry name" value="WH_MCM3_C"/>
    <property type="match status" value="1"/>
</dbReference>
<dbReference type="PRINTS" id="PR01657">
    <property type="entry name" value="MCMFAMILY"/>
</dbReference>
<dbReference type="PRINTS" id="PR01659">
    <property type="entry name" value="MCMPROTEIN3"/>
</dbReference>
<dbReference type="SMART" id="SM00382">
    <property type="entry name" value="AAA"/>
    <property type="match status" value="1"/>
</dbReference>
<dbReference type="SMART" id="SM00350">
    <property type="entry name" value="MCM"/>
    <property type="match status" value="1"/>
</dbReference>
<dbReference type="SUPFAM" id="SSF50249">
    <property type="entry name" value="Nucleic acid-binding proteins"/>
    <property type="match status" value="1"/>
</dbReference>
<dbReference type="SUPFAM" id="SSF52540">
    <property type="entry name" value="P-loop containing nucleoside triphosphate hydrolases"/>
    <property type="match status" value="1"/>
</dbReference>
<dbReference type="PROSITE" id="PS00847">
    <property type="entry name" value="MCM_1"/>
    <property type="match status" value="1"/>
</dbReference>
<dbReference type="PROSITE" id="PS50051">
    <property type="entry name" value="MCM_2"/>
    <property type="match status" value="1"/>
</dbReference>
<evidence type="ECO:0000250" key="1">
    <source>
        <dbReference type="UniProtKB" id="P25205"/>
    </source>
</evidence>
<evidence type="ECO:0000250" key="2">
    <source>
        <dbReference type="UniProtKB" id="P25206"/>
    </source>
</evidence>
<evidence type="ECO:0000250" key="3">
    <source>
        <dbReference type="UniProtKB" id="P49739"/>
    </source>
</evidence>
<evidence type="ECO:0000256" key="4">
    <source>
        <dbReference type="SAM" id="MobiDB-lite"/>
    </source>
</evidence>
<evidence type="ECO:0000305" key="5"/>
<organism>
    <name type="scientific">Bos taurus</name>
    <name type="common">Bovine</name>
    <dbReference type="NCBI Taxonomy" id="9913"/>
    <lineage>
        <taxon>Eukaryota</taxon>
        <taxon>Metazoa</taxon>
        <taxon>Chordata</taxon>
        <taxon>Craniata</taxon>
        <taxon>Vertebrata</taxon>
        <taxon>Euteleostomi</taxon>
        <taxon>Mammalia</taxon>
        <taxon>Eutheria</taxon>
        <taxon>Laurasiatheria</taxon>
        <taxon>Artiodactyla</taxon>
        <taxon>Ruminantia</taxon>
        <taxon>Pecora</taxon>
        <taxon>Bovidae</taxon>
        <taxon>Bovinae</taxon>
        <taxon>Bos</taxon>
    </lineage>
</organism>